<feature type="chain" id="PRO_0000390453" description="5'-tyrosyl-DNA phosphodiesterase">
    <location>
        <begin position="1"/>
        <end position="350"/>
    </location>
</feature>
<feature type="region of interest" description="Interaction with 5' end of substrate DNA" evidence="2">
    <location>
        <begin position="113"/>
        <end position="117"/>
    </location>
</feature>
<feature type="region of interest" description="Interaction with 5' end of substrate DNA" evidence="2">
    <location>
        <begin position="219"/>
        <end position="224"/>
    </location>
</feature>
<feature type="region of interest" description="Interaction with 5' end of substrate DNA" evidence="2">
    <location>
        <begin position="260"/>
        <end position="262"/>
    </location>
</feature>
<feature type="active site" description="Proton donor/acceptor" evidence="1">
    <location>
        <position position="258"/>
    </location>
</feature>
<feature type="binding site" evidence="2">
    <location>
        <position position="115"/>
    </location>
    <ligand>
        <name>Mg(2+)</name>
        <dbReference type="ChEBI" id="CHEBI:18420"/>
    </ligand>
</feature>
<feature type="binding site" evidence="2">
    <location>
        <position position="145"/>
    </location>
    <ligand>
        <name>Mg(2+)</name>
        <dbReference type="ChEBI" id="CHEBI:18420"/>
    </ligand>
</feature>
<feature type="site" description="Interaction with 5' end of substrate DNA" evidence="2">
    <location>
        <position position="172"/>
    </location>
</feature>
<feature type="site" description="Interaction with 5' end of substrate DNA" evidence="2">
    <location>
        <position position="290"/>
    </location>
</feature>
<feature type="site" description="Interaction with 5' end of substrate DNA" evidence="2">
    <location>
        <position position="308"/>
    </location>
</feature>
<feature type="site" description="Interaction with 5' end of substrate DNA" evidence="2">
    <location>
        <position position="340"/>
    </location>
</feature>
<keyword id="KW-0227">DNA damage</keyword>
<keyword id="KW-0234">DNA repair</keyword>
<keyword id="KW-0378">Hydrolase</keyword>
<keyword id="KW-0460">Magnesium</keyword>
<keyword id="KW-0479">Metal-binding</keyword>
<keyword id="KW-0540">Nuclease</keyword>
<keyword id="KW-0539">Nucleus</keyword>
<keyword id="KW-1185">Reference proteome</keyword>
<name>TYDP2_CAEBR</name>
<organism>
    <name type="scientific">Caenorhabditis briggsae</name>
    <dbReference type="NCBI Taxonomy" id="6238"/>
    <lineage>
        <taxon>Eukaryota</taxon>
        <taxon>Metazoa</taxon>
        <taxon>Ecdysozoa</taxon>
        <taxon>Nematoda</taxon>
        <taxon>Chromadorea</taxon>
        <taxon>Rhabditida</taxon>
        <taxon>Rhabditina</taxon>
        <taxon>Rhabditomorpha</taxon>
        <taxon>Rhabditoidea</taxon>
        <taxon>Rhabditidae</taxon>
        <taxon>Peloderinae</taxon>
        <taxon>Caenorhabditis</taxon>
    </lineage>
</organism>
<reference key="1">
    <citation type="journal article" date="2003" name="PLoS Biol.">
        <title>The genome sequence of Caenorhabditis briggsae: a platform for comparative genomics.</title>
        <authorList>
            <person name="Stein L.D."/>
            <person name="Bao Z."/>
            <person name="Blasiar D."/>
            <person name="Blumenthal T."/>
            <person name="Brent M.R."/>
            <person name="Chen N."/>
            <person name="Chinwalla A."/>
            <person name="Clarke L."/>
            <person name="Clee C."/>
            <person name="Coghlan A."/>
            <person name="Coulson A."/>
            <person name="D'Eustachio P."/>
            <person name="Fitch D.H.A."/>
            <person name="Fulton L.A."/>
            <person name="Fulton R.E."/>
            <person name="Griffiths-Jones S."/>
            <person name="Harris T.W."/>
            <person name="Hillier L.W."/>
            <person name="Kamath R."/>
            <person name="Kuwabara P.E."/>
            <person name="Mardis E.R."/>
            <person name="Marra M.A."/>
            <person name="Miner T.L."/>
            <person name="Minx P."/>
            <person name="Mullikin J.C."/>
            <person name="Plumb R.W."/>
            <person name="Rogers J."/>
            <person name="Schein J.E."/>
            <person name="Sohrmann M."/>
            <person name="Spieth J."/>
            <person name="Stajich J.E."/>
            <person name="Wei C."/>
            <person name="Willey D."/>
            <person name="Wilson R.K."/>
            <person name="Durbin R.M."/>
            <person name="Waterston R.H."/>
        </authorList>
    </citation>
    <scope>NUCLEOTIDE SEQUENCE [LARGE SCALE GENOMIC DNA]</scope>
    <source>
        <strain>AF16</strain>
    </source>
</reference>
<sequence>MSSSDNDEPKVVEISDDEMECEGVVEVNNEQSDEAKMREFAEITATDEIMAQSILQDVGWDLKRALDVFFGSDAFKETRNEAVMGPSSSAVGNQPVMTAEDLKGFELSLMSWNIDGLDGRSLATRMKAVATIVKKVNPDILFLQEVVDRDLEPIDKLQSLYKIYYSNKGCQYYTAILVSKMFEVEKHDVVHFQNSGMYRTLQIVEGSIGGMKVFLVNTHLESMRDHRAQRMAQFSFCMDRCAEIIANNPGCFLFFGGDLNLRDEEISSIPDGVLDAWVSAGCDTKTKWTWDTYKNDNKQGFNGAKMRFDRIYWHGPFNQVHFSLEGRQRIRSCLCFPSDHWAINATFSAV</sequence>
<gene>
    <name type="ORF">CBG18823</name>
</gene>
<dbReference type="EC" id="3.1.4.-" evidence="2"/>
<dbReference type="EMBL" id="HE601380">
    <property type="protein sequence ID" value="CAP36193.2"/>
    <property type="molecule type" value="Genomic_DNA"/>
</dbReference>
<dbReference type="FunCoup" id="A8XU68">
    <property type="interactions" value="1918"/>
</dbReference>
<dbReference type="STRING" id="6238.A8XU68"/>
<dbReference type="WormBase" id="CBG18823">
    <property type="protein sequence ID" value="CBP46135"/>
    <property type="gene ID" value="WBGene00038163"/>
    <property type="gene designation" value="Cbr-tdpt-1"/>
</dbReference>
<dbReference type="eggNOG" id="KOG2756">
    <property type="taxonomic scope" value="Eukaryota"/>
</dbReference>
<dbReference type="HOGENOM" id="CLU_047318_0_0_1"/>
<dbReference type="InParanoid" id="A8XU68"/>
<dbReference type="OMA" id="DVWEMCG"/>
<dbReference type="Proteomes" id="UP000008549">
    <property type="component" value="Unassembled WGS sequence"/>
</dbReference>
<dbReference type="GO" id="GO:0005737">
    <property type="term" value="C:cytoplasm"/>
    <property type="evidence" value="ECO:0000318"/>
    <property type="project" value="GO_Central"/>
</dbReference>
<dbReference type="GO" id="GO:0016605">
    <property type="term" value="C:PML body"/>
    <property type="evidence" value="ECO:0000318"/>
    <property type="project" value="GO_Central"/>
</dbReference>
<dbReference type="GO" id="GO:0070260">
    <property type="term" value="F:5'-tyrosyl-DNA phosphodiesterase activity"/>
    <property type="evidence" value="ECO:0000318"/>
    <property type="project" value="GO_Central"/>
</dbReference>
<dbReference type="GO" id="GO:0046872">
    <property type="term" value="F:metal ion binding"/>
    <property type="evidence" value="ECO:0007669"/>
    <property type="project" value="UniProtKB-KW"/>
</dbReference>
<dbReference type="GO" id="GO:0004518">
    <property type="term" value="F:nuclease activity"/>
    <property type="evidence" value="ECO:0007669"/>
    <property type="project" value="UniProtKB-KW"/>
</dbReference>
<dbReference type="GO" id="GO:0003697">
    <property type="term" value="F:single-stranded DNA binding"/>
    <property type="evidence" value="ECO:0000318"/>
    <property type="project" value="GO_Central"/>
</dbReference>
<dbReference type="GO" id="GO:0006302">
    <property type="term" value="P:double-strand break repair"/>
    <property type="evidence" value="ECO:0000318"/>
    <property type="project" value="GO_Central"/>
</dbReference>
<dbReference type="CDD" id="cd09080">
    <property type="entry name" value="TDP2"/>
    <property type="match status" value="1"/>
</dbReference>
<dbReference type="FunFam" id="1.10.8.10:FF:000185">
    <property type="entry name" value="Tdpt-1"/>
    <property type="match status" value="1"/>
</dbReference>
<dbReference type="FunFam" id="3.60.10.10:FF:000150">
    <property type="entry name" value="Tdpt-1"/>
    <property type="match status" value="1"/>
</dbReference>
<dbReference type="Gene3D" id="1.10.8.10">
    <property type="entry name" value="DNA helicase RuvA subunit, C-terminal domain"/>
    <property type="match status" value="1"/>
</dbReference>
<dbReference type="Gene3D" id="3.60.10.10">
    <property type="entry name" value="Endonuclease/exonuclease/phosphatase"/>
    <property type="match status" value="1"/>
</dbReference>
<dbReference type="InterPro" id="IPR036691">
    <property type="entry name" value="Endo/exonu/phosph_ase_sf"/>
</dbReference>
<dbReference type="InterPro" id="IPR005135">
    <property type="entry name" value="Endo/exonuclease/phosphatase"/>
</dbReference>
<dbReference type="InterPro" id="IPR051547">
    <property type="entry name" value="TDP2-like"/>
</dbReference>
<dbReference type="InterPro" id="IPR009060">
    <property type="entry name" value="UBA-like_sf"/>
</dbReference>
<dbReference type="InterPro" id="IPR054109">
    <property type="entry name" value="UBA_8"/>
</dbReference>
<dbReference type="PANTHER" id="PTHR15822">
    <property type="entry name" value="TRAF AND TNF RECEPTOR-ASSOCIATED PROTEIN"/>
    <property type="match status" value="1"/>
</dbReference>
<dbReference type="PANTHER" id="PTHR15822:SF4">
    <property type="entry name" value="TYROSYL-DNA PHOSPHODIESTERASE 2"/>
    <property type="match status" value="1"/>
</dbReference>
<dbReference type="Pfam" id="PF03372">
    <property type="entry name" value="Exo_endo_phos"/>
    <property type="match status" value="1"/>
</dbReference>
<dbReference type="Pfam" id="PF22566">
    <property type="entry name" value="UBA_8"/>
    <property type="match status" value="1"/>
</dbReference>
<dbReference type="SUPFAM" id="SSF56219">
    <property type="entry name" value="DNase I-like"/>
    <property type="match status" value="1"/>
</dbReference>
<dbReference type="SUPFAM" id="SSF46934">
    <property type="entry name" value="UBA-like"/>
    <property type="match status" value="1"/>
</dbReference>
<accession>A8XU68</accession>
<evidence type="ECO:0000250" key="1">
    <source>
        <dbReference type="UniProtKB" id="O95551"/>
    </source>
</evidence>
<evidence type="ECO:0000250" key="2">
    <source>
        <dbReference type="UniProtKB" id="Q9JJX7"/>
    </source>
</evidence>
<evidence type="ECO:0000305" key="3"/>
<proteinExistence type="inferred from homology"/>
<protein>
    <recommendedName>
        <fullName>5'-tyrosyl-DNA phosphodiesterase</fullName>
        <shortName>5'-Tyr-DNA phosphodiesterase</shortName>
        <ecNumber evidence="2">3.1.4.-</ecNumber>
    </recommendedName>
</protein>
<comment type="function">
    <text evidence="2">DNA repair enzyme that can remove a variety of covalent adducts from DNA through hydrolysis of a 5'-phosphodiester bond, giving rise to DNA with a free 5' phosphate. Catalyzes the hydrolysis of dead-end complexes between DNA and the topoisomerase 2 (top2) active site tyrosine residue. Hydrolyzes 5'-phosphoglycolates on protruding 5' ends on DNA double-strand breaks (DSBs) due to DNA damage by radiation and free radicals.</text>
</comment>
<comment type="cofactor">
    <cofactor evidence="2">
        <name>Mg(2+)</name>
        <dbReference type="ChEBI" id="CHEBI:18420"/>
    </cofactor>
    <cofactor evidence="2">
        <name>Mn(2+)</name>
        <dbReference type="ChEBI" id="CHEBI:29035"/>
    </cofactor>
    <text evidence="2">Binds 1 magnesium or manganese ion per subunit.</text>
</comment>
<comment type="subcellular location">
    <subcellularLocation>
        <location evidence="1">Nucleus</location>
    </subcellularLocation>
    <subcellularLocation>
        <location evidence="1">Nucleus</location>
        <location evidence="1">PML body</location>
    </subcellularLocation>
</comment>
<comment type="similarity">
    <text evidence="3">Belongs to the CCR4/nocturin family. TTRAP/TDP2 subfamily.</text>
</comment>